<sequence>MGQTRRLRRLGRHRCRGQRVRWRTATSADHPRRGRPAAQAVRRRRPVSLDGRYGIQAVRRRAVSIFPCPLSRVIERLKQALYPKLLPIARNWWAKLGREAPWPDSLDDWLASCHAAGQTRSTALMLKYGTNDWNALHQDLYGELVFPLQVVINLSDPETDYTGGEFLLVEQRPRAQSRGTAMQLPQGHGYVFTTRDRPVRTSRGWSASPVRHGLSTIRSGERYAMGLIFHDAA</sequence>
<keyword id="KW-1185">Reference proteome</keyword>
<feature type="chain" id="PRO_0000427477" description="Uncharacterized protein MT2286">
    <location>
        <begin position="1"/>
        <end position="233"/>
    </location>
</feature>
<feature type="region of interest" description="Disordered" evidence="1">
    <location>
        <begin position="21"/>
        <end position="43"/>
    </location>
</feature>
<comment type="sequence caution" evidence="2">
    <conflict type="erroneous initiation">
        <sequence resource="EMBL-CDS" id="AAK46572"/>
    </conflict>
</comment>
<proteinExistence type="predicted"/>
<protein>
    <recommendedName>
        <fullName>Uncharacterized protein MT2286</fullName>
    </recommendedName>
</protein>
<dbReference type="EMBL" id="AE000516">
    <property type="protein sequence ID" value="AAK46572.1"/>
    <property type="status" value="ALT_INIT"/>
    <property type="molecule type" value="Genomic_DNA"/>
</dbReference>
<dbReference type="PIR" id="G70776">
    <property type="entry name" value="G70776"/>
</dbReference>
<dbReference type="KEGG" id="mtc:MT2286"/>
<dbReference type="PATRIC" id="fig|83331.31.peg.2461"/>
<dbReference type="HOGENOM" id="CLU_073550_1_0_11"/>
<dbReference type="Proteomes" id="UP000001020">
    <property type="component" value="Chromosome"/>
</dbReference>
<dbReference type="Gene3D" id="2.60.120.620">
    <property type="entry name" value="q2cbj1_9rhob like domain"/>
    <property type="match status" value="1"/>
</dbReference>
<dbReference type="InterPro" id="IPR018655">
    <property type="entry name" value="DUF2086"/>
</dbReference>
<dbReference type="Pfam" id="PF09859">
    <property type="entry name" value="Oxygenase-NA"/>
    <property type="match status" value="1"/>
</dbReference>
<name>Y2227_MYCTO</name>
<evidence type="ECO:0000256" key="1">
    <source>
        <dbReference type="SAM" id="MobiDB-lite"/>
    </source>
</evidence>
<evidence type="ECO:0000305" key="2"/>
<organism>
    <name type="scientific">Mycobacterium tuberculosis (strain CDC 1551 / Oshkosh)</name>
    <dbReference type="NCBI Taxonomy" id="83331"/>
    <lineage>
        <taxon>Bacteria</taxon>
        <taxon>Bacillati</taxon>
        <taxon>Actinomycetota</taxon>
        <taxon>Actinomycetes</taxon>
        <taxon>Mycobacteriales</taxon>
        <taxon>Mycobacteriaceae</taxon>
        <taxon>Mycobacterium</taxon>
        <taxon>Mycobacterium tuberculosis complex</taxon>
    </lineage>
</organism>
<gene>
    <name type="ordered locus">MT2286</name>
</gene>
<accession>P9WLH6</accession>
<accession>L0T973</accession>
<accession>Q10511</accession>
<reference key="1">
    <citation type="journal article" date="2002" name="J. Bacteriol.">
        <title>Whole-genome comparison of Mycobacterium tuberculosis clinical and laboratory strains.</title>
        <authorList>
            <person name="Fleischmann R.D."/>
            <person name="Alland D."/>
            <person name="Eisen J.A."/>
            <person name="Carpenter L."/>
            <person name="White O."/>
            <person name="Peterson J.D."/>
            <person name="DeBoy R.T."/>
            <person name="Dodson R.J."/>
            <person name="Gwinn M.L."/>
            <person name="Haft D.H."/>
            <person name="Hickey E.K."/>
            <person name="Kolonay J.F."/>
            <person name="Nelson W.C."/>
            <person name="Umayam L.A."/>
            <person name="Ermolaeva M.D."/>
            <person name="Salzberg S.L."/>
            <person name="Delcher A."/>
            <person name="Utterback T.R."/>
            <person name="Weidman J.F."/>
            <person name="Khouri H.M."/>
            <person name="Gill J."/>
            <person name="Mikula A."/>
            <person name="Bishai W."/>
            <person name="Jacobs W.R. Jr."/>
            <person name="Venter J.C."/>
            <person name="Fraser C.M."/>
        </authorList>
    </citation>
    <scope>NUCLEOTIDE SEQUENCE [LARGE SCALE GENOMIC DNA]</scope>
    <source>
        <strain>CDC 1551 / Oshkosh</strain>
    </source>
</reference>